<reference key="1">
    <citation type="journal article" date="2002" name="Proc. Natl. Acad. Sci. U.S.A.">
        <title>The Brucella suis genome reveals fundamental similarities between animal and plant pathogens and symbionts.</title>
        <authorList>
            <person name="Paulsen I.T."/>
            <person name="Seshadri R."/>
            <person name="Nelson K.E."/>
            <person name="Eisen J.A."/>
            <person name="Heidelberg J.F."/>
            <person name="Read T.D."/>
            <person name="Dodson R.J."/>
            <person name="Umayam L.A."/>
            <person name="Brinkac L.M."/>
            <person name="Beanan M.J."/>
            <person name="Daugherty S.C."/>
            <person name="DeBoy R.T."/>
            <person name="Durkin A.S."/>
            <person name="Kolonay J.F."/>
            <person name="Madupu R."/>
            <person name="Nelson W.C."/>
            <person name="Ayodeji B."/>
            <person name="Kraul M."/>
            <person name="Shetty J."/>
            <person name="Malek J.A."/>
            <person name="Van Aken S.E."/>
            <person name="Riedmuller S."/>
            <person name="Tettelin H."/>
            <person name="Gill S.R."/>
            <person name="White O."/>
            <person name="Salzberg S.L."/>
            <person name="Hoover D.L."/>
            <person name="Lindler L.E."/>
            <person name="Halling S.M."/>
            <person name="Boyle S.M."/>
            <person name="Fraser C.M."/>
        </authorList>
    </citation>
    <scope>NUCLEOTIDE SEQUENCE [LARGE SCALE GENOMIC DNA]</scope>
    <source>
        <strain>1330</strain>
    </source>
</reference>
<reference key="2">
    <citation type="journal article" date="2011" name="J. Bacteriol.">
        <title>Revised genome sequence of Brucella suis 1330.</title>
        <authorList>
            <person name="Tae H."/>
            <person name="Shallom S."/>
            <person name="Settlage R."/>
            <person name="Preston D."/>
            <person name="Adams L.G."/>
            <person name="Garner H.R."/>
        </authorList>
    </citation>
    <scope>NUCLEOTIDE SEQUENCE [LARGE SCALE GENOMIC DNA]</scope>
    <source>
        <strain>1330</strain>
    </source>
</reference>
<feature type="signal peptide" description="Tat-type signal" evidence="2">
    <location>
        <begin position="1"/>
        <end position="44"/>
    </location>
</feature>
<feature type="chain" id="PRO_0000019826" description="Nitrous-oxide reductase">
    <location>
        <begin position="45"/>
        <end position="639"/>
    </location>
</feature>
<feature type="region of interest" description="COX2-like">
    <location>
        <begin position="541"/>
        <end position="639"/>
    </location>
</feature>
<feature type="binding site" evidence="1">
    <location>
        <position position="136"/>
    </location>
    <ligand>
        <name>Cu cation</name>
        <dbReference type="ChEBI" id="CHEBI:23378"/>
        <label>Z2</label>
    </ligand>
</feature>
<feature type="binding site" evidence="1">
    <location>
        <position position="137"/>
    </location>
    <ligand>
        <name>Cu cation</name>
        <dbReference type="ChEBI" id="CHEBI:23378"/>
        <label>Z3</label>
    </ligand>
</feature>
<feature type="binding site" evidence="1">
    <location>
        <position position="185"/>
    </location>
    <ligand>
        <name>Cu cation</name>
        <dbReference type="ChEBI" id="CHEBI:23378"/>
        <label>Z2</label>
    </ligand>
</feature>
<feature type="binding site" evidence="1">
    <location>
        <position position="262"/>
    </location>
    <ligand>
        <name>Ca(2+)</name>
        <dbReference type="ChEBI" id="CHEBI:29108"/>
        <label>2</label>
    </ligand>
</feature>
<feature type="binding site" evidence="1">
    <location>
        <position position="265"/>
    </location>
    <ligand>
        <name>Ca(2+)</name>
        <dbReference type="ChEBI" id="CHEBI:29108"/>
        <label>2</label>
    </ligand>
</feature>
<feature type="binding site" evidence="1">
    <location>
        <position position="273"/>
    </location>
    <ligand>
        <name>Ca(2+)</name>
        <dbReference type="ChEBI" id="CHEBI:29108"/>
        <label>2</label>
    </ligand>
</feature>
<feature type="binding site" evidence="1">
    <location>
        <position position="279"/>
    </location>
    <ligand>
        <name>Ca(2+)</name>
        <dbReference type="ChEBI" id="CHEBI:29108"/>
        <label>2</label>
    </ligand>
</feature>
<feature type="binding site" evidence="1">
    <location>
        <position position="324"/>
    </location>
    <ligand>
        <name>Ca(2+)</name>
        <dbReference type="ChEBI" id="CHEBI:29108"/>
        <label>2</label>
    </ligand>
</feature>
<feature type="binding site" evidence="1">
    <location>
        <position position="326"/>
    </location>
    <ligand>
        <name>Cu cation</name>
        <dbReference type="ChEBI" id="CHEBI:23378"/>
        <label>Z1</label>
    </ligand>
</feature>
<feature type="binding site" evidence="1">
    <location>
        <position position="381"/>
    </location>
    <ligand>
        <name>Cu cation</name>
        <dbReference type="ChEBI" id="CHEBI:23378"/>
        <label>Z1</label>
    </ligand>
</feature>
<feature type="binding site" evidence="1">
    <location>
        <position position="432"/>
    </location>
    <ligand>
        <name>Cu cation</name>
        <dbReference type="ChEBI" id="CHEBI:23378"/>
        <label>Z3</label>
    </ligand>
</feature>
<feature type="binding site" evidence="1">
    <location>
        <position position="453"/>
    </location>
    <ligand>
        <name>Ca(2+)</name>
        <dbReference type="ChEBI" id="CHEBI:29108"/>
        <label>1</label>
    </ligand>
</feature>
<feature type="binding site" evidence="1">
    <location>
        <position position="468"/>
    </location>
    <ligand>
        <name>Ca(2+)</name>
        <dbReference type="ChEBI" id="CHEBI:29108"/>
        <label>1</label>
    </ligand>
</feature>
<feature type="binding site" evidence="1">
    <location>
        <position position="493"/>
    </location>
    <ligand>
        <name>Cu cation</name>
        <dbReference type="ChEBI" id="CHEBI:23378"/>
        <label>Z4</label>
    </ligand>
</feature>
<feature type="binding site" evidence="1">
    <location>
        <position position="582"/>
    </location>
    <ligand>
        <name>Cu cation</name>
        <dbReference type="ChEBI" id="CHEBI:23378"/>
        <label>A1</label>
    </ligand>
</feature>
<feature type="binding site" evidence="1">
    <location>
        <position position="617"/>
    </location>
    <ligand>
        <name>Cu cation</name>
        <dbReference type="ChEBI" id="CHEBI:23378"/>
        <label>A1</label>
    </ligand>
</feature>
<feature type="binding site" evidence="1">
    <location>
        <position position="617"/>
    </location>
    <ligand>
        <name>Cu cation</name>
        <dbReference type="ChEBI" id="CHEBI:23378"/>
        <label>A2</label>
    </ligand>
</feature>
<feature type="binding site" evidence="1">
    <location>
        <position position="619"/>
    </location>
    <ligand>
        <name>Cu cation</name>
        <dbReference type="ChEBI" id="CHEBI:23378"/>
        <label>A2</label>
    </ligand>
</feature>
<feature type="binding site" evidence="1">
    <location>
        <position position="621"/>
    </location>
    <ligand>
        <name>Cu cation</name>
        <dbReference type="ChEBI" id="CHEBI:23378"/>
        <label>A1</label>
    </ligand>
</feature>
<feature type="binding site" evidence="1">
    <location>
        <position position="621"/>
    </location>
    <ligand>
        <name>Cu cation</name>
        <dbReference type="ChEBI" id="CHEBI:23378"/>
        <label>A2</label>
    </ligand>
</feature>
<feature type="binding site" evidence="1">
    <location>
        <position position="625"/>
    </location>
    <ligand>
        <name>Cu cation</name>
        <dbReference type="ChEBI" id="CHEBI:23378"/>
        <label>A2</label>
    </ligand>
</feature>
<feature type="binding site" evidence="1">
    <location>
        <position position="628"/>
    </location>
    <ligand>
        <name>Cu cation</name>
        <dbReference type="ChEBI" id="CHEBI:23378"/>
        <label>A1</label>
    </ligand>
</feature>
<gene>
    <name type="primary">nosZ</name>
    <name type="ordered locus">BRA0275</name>
    <name type="ordered locus">BS1330_II0272</name>
</gene>
<protein>
    <recommendedName>
        <fullName>Nitrous-oxide reductase</fullName>
        <ecNumber>1.7.2.4</ecNumber>
    </recommendedName>
    <alternativeName>
        <fullName>N(2)OR</fullName>
    </alternativeName>
    <alternativeName>
        <fullName>N2O reductase</fullName>
    </alternativeName>
</protein>
<organism>
    <name type="scientific">Brucella suis biovar 1 (strain 1330)</name>
    <dbReference type="NCBI Taxonomy" id="204722"/>
    <lineage>
        <taxon>Bacteria</taxon>
        <taxon>Pseudomonadati</taxon>
        <taxon>Pseudomonadota</taxon>
        <taxon>Alphaproteobacteria</taxon>
        <taxon>Hyphomicrobiales</taxon>
        <taxon>Brucellaceae</taxon>
        <taxon>Brucella/Ochrobactrum group</taxon>
        <taxon>Brucella</taxon>
    </lineage>
</organism>
<evidence type="ECO:0000250" key="1"/>
<evidence type="ECO:0000255" key="2"/>
<evidence type="ECO:0000305" key="3"/>
<accession>Q8FX16</accession>
<accession>G0KFB0</accession>
<proteinExistence type="inferred from homology"/>
<comment type="function">
    <text evidence="1">Nitrous-oxide reductase is part of a bacterial respiratory system which is activated under anaerobic conditions in the presence of nitrate or nitrous oxide.</text>
</comment>
<comment type="catalytic activity">
    <reaction>
        <text>N2 + 2 Fe(III)-[cytochrome c] + H2O = nitrous oxide + 2 Fe(II)-[cytochrome c] + 2 H(+)</text>
        <dbReference type="Rhea" id="RHEA:43108"/>
        <dbReference type="Rhea" id="RHEA-COMP:10350"/>
        <dbReference type="Rhea" id="RHEA-COMP:14399"/>
        <dbReference type="ChEBI" id="CHEBI:15377"/>
        <dbReference type="ChEBI" id="CHEBI:15378"/>
        <dbReference type="ChEBI" id="CHEBI:17045"/>
        <dbReference type="ChEBI" id="CHEBI:17997"/>
        <dbReference type="ChEBI" id="CHEBI:29033"/>
        <dbReference type="ChEBI" id="CHEBI:29034"/>
        <dbReference type="EC" id="1.7.2.4"/>
    </reaction>
</comment>
<comment type="cofactor">
    <cofactor evidence="1">
        <name>Ca(2+)</name>
        <dbReference type="ChEBI" id="CHEBI:29108"/>
    </cofactor>
    <text evidence="1">Binds 2 calcium ions per subunit.</text>
</comment>
<comment type="cofactor">
    <cofactor evidence="1">
        <name>Cu cation</name>
        <dbReference type="ChEBI" id="CHEBI:23378"/>
    </cofactor>
    <text evidence="1">Binds 6 Cu cations per subunit. Each subunit contains 2 copper centers; Cu(A) (binuclear) and Cu(Z) (tetranuclear). Cu(Z) is thought to be the site of nitrous oxide reduction.</text>
</comment>
<comment type="pathway">
    <text>Nitrogen metabolism; nitrate reduction (denitrification); dinitrogen from nitrate: step 4/4.</text>
</comment>
<comment type="subunit">
    <text evidence="1">Homodimer.</text>
</comment>
<comment type="subcellular location">
    <subcellularLocation>
        <location evidence="1">Periplasm</location>
    </subcellularLocation>
</comment>
<comment type="PTM">
    <text>Predicted to be exported by the Tat system. The position of the signal peptide cleavage has not been experimentally proven.</text>
</comment>
<comment type="similarity">
    <text evidence="3">Belongs to the NosZ family.</text>
</comment>
<comment type="similarity">
    <text evidence="3">In the C-terminal section; belongs to the cytochrome c oxidase subunit 2 family.</text>
</comment>
<name>NOSZ_BRUSU</name>
<sequence>MTEETRKSQLSRRQLLGTSAFVAAAGASGLGGALLAGSSETALAAGAAKGGMSPEVKPGELDEYYVFFSSGQCGEVRIVGLPSMRELMRIPVFNRDSATGWGLTNESRKVLTEGLLPQDREFLKDRGDIFLNGDLHHPHPSFTDGTYDGRYLYANDKANTRVCRIRLDVMKCDKIIQLPNQHTVHGLRVQKYPKTGYVFCNGEDRVPIPNDGSHLNDVKQYHAIFTAVDGETMKVAWQVMVDGNLDNVDCDYQGKYAFSTCYNSEEGTTLAEMMSSEQDWIVVFNLKRIEEAVANGDFKEMNGVPVIDGRHGSKYTRYIPVPNSPHGINTAPDGIHVVANGKLSPTVTVFDVRKFDDLFDDKIKPRDAVVAEPELGLGPLHTAYDDKGNAYTTLFIDSQICKWNIEDAKRAFKGEKVDPIRQKLDVHYQPGHNHSSMGQTKEVDGKWLISLNKFSKDRYLNVGPLKPENDQLIDISGDKMVIVHDGPSFAEPHDATIVHRSKINPVSFWSREDPFFADAVAQAKADGLDLMEANEVVRDGNKVRVYMTSSAPAFGLTEFTVQQDDEVTVYVTNIDEIEDLTHGFAIVNYGVNMEVAPQATASVTFKASKPGVWWYYCSWFCHAMHMEMQGRMLVEPKKA</sequence>
<dbReference type="EC" id="1.7.2.4"/>
<dbReference type="EMBL" id="AE014292">
    <property type="protein sequence ID" value="AAN33476.1"/>
    <property type="molecule type" value="Genomic_DNA"/>
</dbReference>
<dbReference type="EMBL" id="CP002998">
    <property type="protein sequence ID" value="AEM19754.1"/>
    <property type="molecule type" value="Genomic_DNA"/>
</dbReference>
<dbReference type="RefSeq" id="WP_002967358.1">
    <property type="nucleotide sequence ID" value="NZ_KN046805.1"/>
</dbReference>
<dbReference type="SMR" id="Q8FX16"/>
<dbReference type="GeneID" id="93015238"/>
<dbReference type="KEGG" id="bms:BRA0275"/>
<dbReference type="KEGG" id="bsi:BS1330_II0272"/>
<dbReference type="PATRIC" id="fig|204722.22.peg.3061"/>
<dbReference type="HOGENOM" id="CLU_016420_0_0_5"/>
<dbReference type="PhylomeDB" id="Q8FX16"/>
<dbReference type="UniPathway" id="UPA00652">
    <property type="reaction ID" value="UER00709"/>
</dbReference>
<dbReference type="Proteomes" id="UP000007104">
    <property type="component" value="Chromosome II"/>
</dbReference>
<dbReference type="GO" id="GO:0016020">
    <property type="term" value="C:membrane"/>
    <property type="evidence" value="ECO:0007669"/>
    <property type="project" value="InterPro"/>
</dbReference>
<dbReference type="GO" id="GO:0042597">
    <property type="term" value="C:periplasmic space"/>
    <property type="evidence" value="ECO:0007669"/>
    <property type="project" value="UniProtKB-SubCell"/>
</dbReference>
<dbReference type="GO" id="GO:0005509">
    <property type="term" value="F:calcium ion binding"/>
    <property type="evidence" value="ECO:0007669"/>
    <property type="project" value="UniProtKB-UniRule"/>
</dbReference>
<dbReference type="GO" id="GO:0005507">
    <property type="term" value="F:copper ion binding"/>
    <property type="evidence" value="ECO:0007669"/>
    <property type="project" value="UniProtKB-UniRule"/>
</dbReference>
<dbReference type="GO" id="GO:0004129">
    <property type="term" value="F:cytochrome-c oxidase activity"/>
    <property type="evidence" value="ECO:0007669"/>
    <property type="project" value="InterPro"/>
</dbReference>
<dbReference type="GO" id="GO:0050304">
    <property type="term" value="F:nitrous-oxide reductase activity"/>
    <property type="evidence" value="ECO:0007669"/>
    <property type="project" value="UniProtKB-UniRule"/>
</dbReference>
<dbReference type="GO" id="GO:0019333">
    <property type="term" value="P:denitrification pathway"/>
    <property type="evidence" value="ECO:0007669"/>
    <property type="project" value="UniProtKB-UniPathway"/>
</dbReference>
<dbReference type="CDD" id="cd04223">
    <property type="entry name" value="N2OR_C"/>
    <property type="match status" value="1"/>
</dbReference>
<dbReference type="Gene3D" id="2.60.40.420">
    <property type="entry name" value="Cupredoxins - blue copper proteins"/>
    <property type="match status" value="1"/>
</dbReference>
<dbReference type="Gene3D" id="2.130.10.10">
    <property type="entry name" value="YVTN repeat-like/Quinoprotein amine dehydrogenase"/>
    <property type="match status" value="1"/>
</dbReference>
<dbReference type="HAMAP" id="MF_00716">
    <property type="entry name" value="NosZ"/>
    <property type="match status" value="1"/>
</dbReference>
<dbReference type="InterPro" id="IPR002429">
    <property type="entry name" value="CcO_II-like_C"/>
</dbReference>
<dbReference type="InterPro" id="IPR008972">
    <property type="entry name" value="Cupredoxin"/>
</dbReference>
<dbReference type="InterPro" id="IPR011045">
    <property type="entry name" value="N2O_reductase_N"/>
</dbReference>
<dbReference type="InterPro" id="IPR034205">
    <property type="entry name" value="N2OR_C"/>
</dbReference>
<dbReference type="InterPro" id="IPR023644">
    <property type="entry name" value="NO_Rdtase"/>
</dbReference>
<dbReference type="InterPro" id="IPR041114">
    <property type="entry name" value="Nos_propeller"/>
</dbReference>
<dbReference type="InterPro" id="IPR041142">
    <property type="entry name" value="NOS_propeller_2"/>
</dbReference>
<dbReference type="InterPro" id="IPR051403">
    <property type="entry name" value="NosZ/Cyto_c_oxidase_sub2"/>
</dbReference>
<dbReference type="InterPro" id="IPR006311">
    <property type="entry name" value="TAT_signal"/>
</dbReference>
<dbReference type="InterPro" id="IPR015943">
    <property type="entry name" value="WD40/YVTN_repeat-like_dom_sf"/>
</dbReference>
<dbReference type="NCBIfam" id="TIGR04244">
    <property type="entry name" value="nitrous_NosZ_RR"/>
    <property type="match status" value="1"/>
</dbReference>
<dbReference type="PANTHER" id="PTHR42838">
    <property type="entry name" value="CYTOCHROME C OXIDASE SUBUNIT II"/>
    <property type="match status" value="1"/>
</dbReference>
<dbReference type="PANTHER" id="PTHR42838:SF2">
    <property type="entry name" value="NITROUS-OXIDE REDUCTASE"/>
    <property type="match status" value="1"/>
</dbReference>
<dbReference type="Pfam" id="PF00116">
    <property type="entry name" value="COX2"/>
    <property type="match status" value="1"/>
</dbReference>
<dbReference type="Pfam" id="PF18764">
    <property type="entry name" value="nos_propeller"/>
    <property type="match status" value="1"/>
</dbReference>
<dbReference type="Pfam" id="PF18793">
    <property type="entry name" value="nos_propeller_2"/>
    <property type="match status" value="1"/>
</dbReference>
<dbReference type="SUPFAM" id="SSF49503">
    <property type="entry name" value="Cupredoxins"/>
    <property type="match status" value="1"/>
</dbReference>
<dbReference type="SUPFAM" id="SSF50974">
    <property type="entry name" value="Nitrous oxide reductase, N-terminal domain"/>
    <property type="match status" value="1"/>
</dbReference>
<dbReference type="PROSITE" id="PS50857">
    <property type="entry name" value="COX2_CUA"/>
    <property type="match status" value="1"/>
</dbReference>
<dbReference type="PROSITE" id="PS51318">
    <property type="entry name" value="TAT"/>
    <property type="match status" value="1"/>
</dbReference>
<keyword id="KW-0106">Calcium</keyword>
<keyword id="KW-0186">Copper</keyword>
<keyword id="KW-0479">Metal-binding</keyword>
<keyword id="KW-0560">Oxidoreductase</keyword>
<keyword id="KW-0574">Periplasm</keyword>
<keyword id="KW-0732">Signal</keyword>